<accession>B7I245</accession>
<reference key="1">
    <citation type="journal article" date="2008" name="J. Bacteriol.">
        <title>Comparative genome sequence analysis of multidrug-resistant Acinetobacter baumannii.</title>
        <authorList>
            <person name="Adams M.D."/>
            <person name="Goglin K."/>
            <person name="Molyneaux N."/>
            <person name="Hujer K.M."/>
            <person name="Lavender H."/>
            <person name="Jamison J.J."/>
            <person name="MacDonald I.J."/>
            <person name="Martin K.M."/>
            <person name="Russo T."/>
            <person name="Campagnari A.A."/>
            <person name="Hujer A.M."/>
            <person name="Bonomo R.A."/>
            <person name="Gill S.R."/>
        </authorList>
    </citation>
    <scope>NUCLEOTIDE SEQUENCE [LARGE SCALE GENOMIC DNA]</scope>
    <source>
        <strain>AB0057</strain>
    </source>
</reference>
<sequence length="147" mass="16253">MRALIQRVLEAKVVVDGETTGEIQHGLLVFLGIGREDTLATGQKLIDKILKYRIFDDEQGKMGWNVSQANGGILLVSQFTLMAQTQKGLRPDFGPAMPPSDAKALYEQLVEYTRSQFENVQTGVFAADMKVHLINDGPVTFNLEVEA</sequence>
<proteinExistence type="inferred from homology"/>
<organism>
    <name type="scientific">Acinetobacter baumannii (strain AB0057)</name>
    <dbReference type="NCBI Taxonomy" id="480119"/>
    <lineage>
        <taxon>Bacteria</taxon>
        <taxon>Pseudomonadati</taxon>
        <taxon>Pseudomonadota</taxon>
        <taxon>Gammaproteobacteria</taxon>
        <taxon>Moraxellales</taxon>
        <taxon>Moraxellaceae</taxon>
        <taxon>Acinetobacter</taxon>
        <taxon>Acinetobacter calcoaceticus/baumannii complex</taxon>
    </lineage>
</organism>
<feature type="chain" id="PRO_1000127479" description="D-aminoacyl-tRNA deacylase">
    <location>
        <begin position="1"/>
        <end position="147"/>
    </location>
</feature>
<feature type="short sequence motif" description="Gly-cisPro motif, important for rejection of L-amino acids" evidence="1">
    <location>
        <begin position="137"/>
        <end position="138"/>
    </location>
</feature>
<comment type="function">
    <text evidence="1">An aminoacyl-tRNA editing enzyme that deacylates mischarged D-aminoacyl-tRNAs. Also deacylates mischarged glycyl-tRNA(Ala), protecting cells against glycine mischarging by AlaRS. Acts via tRNA-based rather than protein-based catalysis; rejects L-amino acids rather than detecting D-amino acids in the active site. By recycling D-aminoacyl-tRNA to D-amino acids and free tRNA molecules, this enzyme counteracts the toxicity associated with the formation of D-aminoacyl-tRNA entities in vivo and helps enforce protein L-homochirality.</text>
</comment>
<comment type="catalytic activity">
    <reaction evidence="1">
        <text>glycyl-tRNA(Ala) + H2O = tRNA(Ala) + glycine + H(+)</text>
        <dbReference type="Rhea" id="RHEA:53744"/>
        <dbReference type="Rhea" id="RHEA-COMP:9657"/>
        <dbReference type="Rhea" id="RHEA-COMP:13640"/>
        <dbReference type="ChEBI" id="CHEBI:15377"/>
        <dbReference type="ChEBI" id="CHEBI:15378"/>
        <dbReference type="ChEBI" id="CHEBI:57305"/>
        <dbReference type="ChEBI" id="CHEBI:78442"/>
        <dbReference type="ChEBI" id="CHEBI:78522"/>
        <dbReference type="EC" id="3.1.1.96"/>
    </reaction>
</comment>
<comment type="catalytic activity">
    <reaction evidence="1">
        <text>a D-aminoacyl-tRNA + H2O = a tRNA + a D-alpha-amino acid + H(+)</text>
        <dbReference type="Rhea" id="RHEA:13953"/>
        <dbReference type="Rhea" id="RHEA-COMP:10123"/>
        <dbReference type="Rhea" id="RHEA-COMP:10124"/>
        <dbReference type="ChEBI" id="CHEBI:15377"/>
        <dbReference type="ChEBI" id="CHEBI:15378"/>
        <dbReference type="ChEBI" id="CHEBI:59871"/>
        <dbReference type="ChEBI" id="CHEBI:78442"/>
        <dbReference type="ChEBI" id="CHEBI:79333"/>
        <dbReference type="EC" id="3.1.1.96"/>
    </reaction>
</comment>
<comment type="subunit">
    <text evidence="1">Homodimer.</text>
</comment>
<comment type="subcellular location">
    <subcellularLocation>
        <location evidence="1">Cytoplasm</location>
    </subcellularLocation>
</comment>
<comment type="domain">
    <text evidence="1">A Gly-cisPro motif from one monomer fits into the active site of the other monomer to allow specific chiral rejection of L-amino acids.</text>
</comment>
<comment type="similarity">
    <text evidence="1">Belongs to the DTD family.</text>
</comment>
<evidence type="ECO:0000255" key="1">
    <source>
        <dbReference type="HAMAP-Rule" id="MF_00518"/>
    </source>
</evidence>
<gene>
    <name evidence="1" type="primary">dtd</name>
    <name type="ordered locus">AB57_3833</name>
</gene>
<dbReference type="EC" id="3.1.1.96" evidence="1"/>
<dbReference type="EMBL" id="CP001182">
    <property type="protein sequence ID" value="ACJ43185.1"/>
    <property type="molecule type" value="Genomic_DNA"/>
</dbReference>
<dbReference type="RefSeq" id="WP_001202027.1">
    <property type="nucleotide sequence ID" value="NC_011586.2"/>
</dbReference>
<dbReference type="SMR" id="B7I245"/>
<dbReference type="KEGG" id="abn:AB57_3833"/>
<dbReference type="HOGENOM" id="CLU_076901_1_1_6"/>
<dbReference type="Proteomes" id="UP000007094">
    <property type="component" value="Chromosome"/>
</dbReference>
<dbReference type="GO" id="GO:0005737">
    <property type="term" value="C:cytoplasm"/>
    <property type="evidence" value="ECO:0007669"/>
    <property type="project" value="UniProtKB-SubCell"/>
</dbReference>
<dbReference type="GO" id="GO:0051500">
    <property type="term" value="F:D-tyrosyl-tRNA(Tyr) deacylase activity"/>
    <property type="evidence" value="ECO:0007669"/>
    <property type="project" value="TreeGrafter"/>
</dbReference>
<dbReference type="GO" id="GO:0106026">
    <property type="term" value="F:Gly-tRNA(Ala) deacylase activity"/>
    <property type="evidence" value="ECO:0007669"/>
    <property type="project" value="UniProtKB-UniRule"/>
</dbReference>
<dbReference type="GO" id="GO:0043908">
    <property type="term" value="F:Ser(Gly)-tRNA(Ala) hydrolase activity"/>
    <property type="evidence" value="ECO:0007669"/>
    <property type="project" value="UniProtKB-UniRule"/>
</dbReference>
<dbReference type="GO" id="GO:0000049">
    <property type="term" value="F:tRNA binding"/>
    <property type="evidence" value="ECO:0007669"/>
    <property type="project" value="UniProtKB-UniRule"/>
</dbReference>
<dbReference type="GO" id="GO:0019478">
    <property type="term" value="P:D-amino acid catabolic process"/>
    <property type="evidence" value="ECO:0007669"/>
    <property type="project" value="UniProtKB-UniRule"/>
</dbReference>
<dbReference type="CDD" id="cd00563">
    <property type="entry name" value="Dtyr_deacylase"/>
    <property type="match status" value="1"/>
</dbReference>
<dbReference type="FunFam" id="3.50.80.10:FF:000001">
    <property type="entry name" value="D-aminoacyl-tRNA deacylase"/>
    <property type="match status" value="1"/>
</dbReference>
<dbReference type="Gene3D" id="3.50.80.10">
    <property type="entry name" value="D-tyrosyl-tRNA(Tyr) deacylase"/>
    <property type="match status" value="1"/>
</dbReference>
<dbReference type="HAMAP" id="MF_00518">
    <property type="entry name" value="Deacylase_Dtd"/>
    <property type="match status" value="1"/>
</dbReference>
<dbReference type="InterPro" id="IPR003732">
    <property type="entry name" value="Daa-tRNA_deacyls_DTD"/>
</dbReference>
<dbReference type="InterPro" id="IPR023509">
    <property type="entry name" value="DTD-like_sf"/>
</dbReference>
<dbReference type="NCBIfam" id="TIGR00256">
    <property type="entry name" value="D-aminoacyl-tRNA deacylase"/>
    <property type="match status" value="1"/>
</dbReference>
<dbReference type="PANTHER" id="PTHR10472:SF5">
    <property type="entry name" value="D-AMINOACYL-TRNA DEACYLASE 1"/>
    <property type="match status" value="1"/>
</dbReference>
<dbReference type="PANTHER" id="PTHR10472">
    <property type="entry name" value="D-TYROSYL-TRNA TYR DEACYLASE"/>
    <property type="match status" value="1"/>
</dbReference>
<dbReference type="Pfam" id="PF02580">
    <property type="entry name" value="Tyr_Deacylase"/>
    <property type="match status" value="1"/>
</dbReference>
<dbReference type="SUPFAM" id="SSF69500">
    <property type="entry name" value="DTD-like"/>
    <property type="match status" value="1"/>
</dbReference>
<name>DTD_ACIB5</name>
<protein>
    <recommendedName>
        <fullName evidence="1">D-aminoacyl-tRNA deacylase</fullName>
        <shortName evidence="1">DTD</shortName>
        <ecNumber evidence="1">3.1.1.96</ecNumber>
    </recommendedName>
    <alternativeName>
        <fullName evidence="1">Gly-tRNA(Ala) deacylase</fullName>
    </alternativeName>
</protein>
<keyword id="KW-0963">Cytoplasm</keyword>
<keyword id="KW-0378">Hydrolase</keyword>
<keyword id="KW-0694">RNA-binding</keyword>
<keyword id="KW-0820">tRNA-binding</keyword>